<reference key="1">
    <citation type="journal article" date="2004" name="Plant Physiol.">
        <title>A comparison of rice chloroplast genomes.</title>
        <authorList>
            <person name="Tang J."/>
            <person name="Xia H."/>
            <person name="Cao M."/>
            <person name="Zhang X."/>
            <person name="Zeng W."/>
            <person name="Hu S."/>
            <person name="Tong W."/>
            <person name="Wang J."/>
            <person name="Wang J."/>
            <person name="Yu J."/>
            <person name="Yang H."/>
            <person name="Zhu L."/>
        </authorList>
    </citation>
    <scope>NUCLEOTIDE SEQUENCE [LARGE SCALE GENOMIC DNA]</scope>
    <source>
        <strain>cv. PA64s</strain>
    </source>
</reference>
<accession>P0C381</accession>
<accession>P12175</accession>
<accession>Q6QY26</accession>
<accession>Q6QY89</accession>
<name>MATK_ORYSA</name>
<comment type="function">
    <text evidence="2">Usually encoded in the trnK tRNA gene intron. Probably assists in splicing its own and other chloroplast group II introns.</text>
</comment>
<comment type="subcellular location">
    <subcellularLocation>
        <location>Plastid</location>
        <location>Chloroplast</location>
    </subcellularLocation>
</comment>
<comment type="RNA editing">
    <location>
        <position position="420" evidence="1"/>
    </location>
</comment>
<comment type="similarity">
    <text evidence="2">Belongs to the intron maturase 2 family. MatK subfamily.</text>
</comment>
<comment type="sequence caution" evidence="3">
    <conflict type="erroneous initiation">
        <sequence resource="EMBL-CDS" id="AAS46168"/>
    </conflict>
    <text>Extended N-terminus.</text>
</comment>
<proteinExistence type="inferred from homology"/>
<organism>
    <name type="scientific">Oryza sativa</name>
    <name type="common">Rice</name>
    <dbReference type="NCBI Taxonomy" id="4530"/>
    <lineage>
        <taxon>Eukaryota</taxon>
        <taxon>Viridiplantae</taxon>
        <taxon>Streptophyta</taxon>
        <taxon>Embryophyta</taxon>
        <taxon>Tracheophyta</taxon>
        <taxon>Spermatophyta</taxon>
        <taxon>Magnoliopsida</taxon>
        <taxon>Liliopsida</taxon>
        <taxon>Poales</taxon>
        <taxon>Poaceae</taxon>
        <taxon>BOP clade</taxon>
        <taxon>Oryzoideae</taxon>
        <taxon>Oryzeae</taxon>
        <taxon>Oryzinae</taxon>
        <taxon>Oryza</taxon>
    </lineage>
</organism>
<dbReference type="EMBL" id="AY522331">
    <property type="protein sequence ID" value="AAS46168.1"/>
    <property type="status" value="ALT_SEQ"/>
    <property type="molecule type" value="Genomic_DNA"/>
</dbReference>
<dbReference type="ExpressionAtlas" id="P0C381">
    <property type="expression patterns" value="baseline"/>
</dbReference>
<dbReference type="GO" id="GO:0009507">
    <property type="term" value="C:chloroplast"/>
    <property type="evidence" value="ECO:0007669"/>
    <property type="project" value="UniProtKB-SubCell"/>
</dbReference>
<dbReference type="GO" id="GO:0009536">
    <property type="term" value="C:plastid"/>
    <property type="evidence" value="ECO:0000305"/>
    <property type="project" value="Gramene"/>
</dbReference>
<dbReference type="GO" id="GO:0003723">
    <property type="term" value="F:RNA binding"/>
    <property type="evidence" value="ECO:0007669"/>
    <property type="project" value="UniProtKB-KW"/>
</dbReference>
<dbReference type="GO" id="GO:0006397">
    <property type="term" value="P:mRNA processing"/>
    <property type="evidence" value="ECO:0007669"/>
    <property type="project" value="UniProtKB-KW"/>
</dbReference>
<dbReference type="GO" id="GO:0008380">
    <property type="term" value="P:RNA splicing"/>
    <property type="evidence" value="ECO:0007669"/>
    <property type="project" value="UniProtKB-UniRule"/>
</dbReference>
<dbReference type="GO" id="GO:0008033">
    <property type="term" value="P:tRNA processing"/>
    <property type="evidence" value="ECO:0007669"/>
    <property type="project" value="UniProtKB-KW"/>
</dbReference>
<dbReference type="HAMAP" id="MF_01390">
    <property type="entry name" value="MatK"/>
    <property type="match status" value="1"/>
</dbReference>
<dbReference type="InterPro" id="IPR024937">
    <property type="entry name" value="Domain_X"/>
</dbReference>
<dbReference type="InterPro" id="IPR002866">
    <property type="entry name" value="Maturase_MatK"/>
</dbReference>
<dbReference type="InterPro" id="IPR024942">
    <property type="entry name" value="Maturase_MatK_N"/>
</dbReference>
<dbReference type="PANTHER" id="PTHR34811">
    <property type="entry name" value="MATURASE K"/>
    <property type="match status" value="1"/>
</dbReference>
<dbReference type="PANTHER" id="PTHR34811:SF1">
    <property type="entry name" value="MATURASE K"/>
    <property type="match status" value="1"/>
</dbReference>
<dbReference type="Pfam" id="PF01348">
    <property type="entry name" value="Intron_maturas2"/>
    <property type="match status" value="1"/>
</dbReference>
<dbReference type="Pfam" id="PF01824">
    <property type="entry name" value="MatK_N"/>
    <property type="match status" value="1"/>
</dbReference>
<feature type="chain" id="PRO_0000143562" description="Maturase K">
    <location>
        <begin position="1"/>
        <end position="511"/>
    </location>
</feature>
<keyword id="KW-0150">Chloroplast</keyword>
<keyword id="KW-0507">mRNA processing</keyword>
<keyword id="KW-0934">Plastid</keyword>
<keyword id="KW-0691">RNA editing</keyword>
<keyword id="KW-0694">RNA-binding</keyword>
<keyword id="KW-0819">tRNA processing</keyword>
<gene>
    <name evidence="2" type="primary">matK</name>
    <name type="synonym">ycf14</name>
    <name type="ORF">PA002</name>
</gene>
<sequence length="511" mass="61429">MEKFEGYSEKLKFPRQYFVYPLLFQEYIYVFAHDYGLNGSELVEIIGSNNKKFSSLLVKRLMIRMYQQNFWINLVNHPNQDRLLDYNNFFYSEFYSQILSEGFAIVVEIPFSLREQSCPEEKEIPKFQNLRSIHSIFPFLEDKFLHLHYLAHIEIPYPIHLDILLQLLQYRIQDVPSLHLLRFFLNYYSNWNSFITSMKSIFILKKENKRLFRFLYNSYVSEYEFFLLFLRKQSSCLRLTSSGTFLERIIFSRKMEHFGLMYPAFFRKTIWFVMDPLMHYVRYQGKAILASKGTLLLKKKWKCYLVRLWQYSFSFWTQPQRIHLNQLENSCFDFLGYFSSVPINSLLVRNQMLENSFLIDTQMKKFDTKVPVTPLIGSLAKAQFCTGSGHPISKPIWTDLSDWDILDRFGRICRNLFHYYSGSSKKKTLYRLKYILRLSCARTLARKHKSTVRAFMQWLGSVFLEEFFTEEEQVFSLMFAKTTYFSFRGSHSERIWYLDILRINDLVNPLN</sequence>
<evidence type="ECO:0000250" key="1"/>
<evidence type="ECO:0000255" key="2">
    <source>
        <dbReference type="HAMAP-Rule" id="MF_01390"/>
    </source>
</evidence>
<evidence type="ECO:0000305" key="3"/>
<protein>
    <recommendedName>
        <fullName evidence="2">Maturase K</fullName>
    </recommendedName>
    <alternativeName>
        <fullName evidence="2">Intron maturase</fullName>
    </alternativeName>
</protein>
<geneLocation type="chloroplast"/>